<comment type="function">
    <text evidence="1">Involved in the type II fatty acid elongation cycle. Catalyzes the elongation of a wide range of acyl-ACP by the addition of two carbons from malonyl-ACP to an acyl acceptor. Can also use unsaturated fatty acids. Catalyzes a key reaction in unsaturated fatty acid (UFA) synthesis, the elongation of the cis-3-decenoyl-ACP produced by FabA.</text>
</comment>
<comment type="catalytic activity">
    <reaction evidence="1">
        <text>a fatty acyl-[ACP] + malonyl-[ACP] + H(+) = a 3-oxoacyl-[ACP] + holo-[ACP] + CO2</text>
        <dbReference type="Rhea" id="RHEA:22836"/>
        <dbReference type="Rhea" id="RHEA-COMP:9623"/>
        <dbReference type="Rhea" id="RHEA-COMP:9685"/>
        <dbReference type="Rhea" id="RHEA-COMP:9916"/>
        <dbReference type="Rhea" id="RHEA-COMP:14125"/>
        <dbReference type="ChEBI" id="CHEBI:15378"/>
        <dbReference type="ChEBI" id="CHEBI:16526"/>
        <dbReference type="ChEBI" id="CHEBI:64479"/>
        <dbReference type="ChEBI" id="CHEBI:78449"/>
        <dbReference type="ChEBI" id="CHEBI:78776"/>
        <dbReference type="ChEBI" id="CHEBI:138651"/>
        <dbReference type="EC" id="2.3.1.41"/>
    </reaction>
    <physiologicalReaction direction="left-to-right" evidence="1">
        <dbReference type="Rhea" id="RHEA:22837"/>
    </physiologicalReaction>
</comment>
<comment type="catalytic activity">
    <reaction evidence="1">
        <text>(3Z)-decenoyl-[ACP] + malonyl-[ACP] + H(+) = 3-oxo-(5Z)-dodecenoyl-[ACP] + holo-[ACP] + CO2</text>
        <dbReference type="Rhea" id="RHEA:54940"/>
        <dbReference type="Rhea" id="RHEA-COMP:9623"/>
        <dbReference type="Rhea" id="RHEA-COMP:9685"/>
        <dbReference type="Rhea" id="RHEA-COMP:9927"/>
        <dbReference type="Rhea" id="RHEA-COMP:14042"/>
        <dbReference type="ChEBI" id="CHEBI:15378"/>
        <dbReference type="ChEBI" id="CHEBI:16526"/>
        <dbReference type="ChEBI" id="CHEBI:64479"/>
        <dbReference type="ChEBI" id="CHEBI:78449"/>
        <dbReference type="ChEBI" id="CHEBI:78798"/>
        <dbReference type="ChEBI" id="CHEBI:138410"/>
    </reaction>
    <physiologicalReaction direction="left-to-right" evidence="1">
        <dbReference type="Rhea" id="RHEA:54941"/>
    </physiologicalReaction>
</comment>
<comment type="pathway">
    <text evidence="1">Lipid metabolism; fatty acid biosynthesis.</text>
</comment>
<comment type="subunit">
    <text evidence="1">Homodimer.</text>
</comment>
<comment type="subcellular location">
    <subcellularLocation>
        <location evidence="1">Cytoplasm</location>
    </subcellularLocation>
</comment>
<comment type="similarity">
    <text evidence="3">Belongs to the thiolase-like superfamily. Beta-ketoacyl-ACP synthases family.</text>
</comment>
<accession>P57193</accession>
<name>FABB_BUCAI</name>
<proteinExistence type="inferred from homology"/>
<protein>
    <recommendedName>
        <fullName evidence="1">3-oxoacyl-[acyl-carrier-protein] synthase 1</fullName>
        <ecNumber evidence="1">2.3.1.41</ecNumber>
    </recommendedName>
    <alternativeName>
        <fullName evidence="1">3-oxoacyl-[acyl-carrier-protein] synthase I</fullName>
    </alternativeName>
    <alternativeName>
        <fullName evidence="1">Beta-ketoacyl-ACP synthase I</fullName>
        <shortName evidence="1">KAS I</shortName>
    </alternativeName>
</protein>
<sequence>MRRVVITGIGIVSSIGNNKKEVLASLYKGVSGIVSSEEMKKLGMRSAVWGNIKLESINIITQKLSRFMNNASRYSFVAMMEAIKDAKIDREYYQKNPRVGLISGSGCSFSKNTLTSDIHLMKNKHISKGISPYLAVKTMPSGISACLSTLFKIYGVTYSISSACATSAHCIGNAFELIQFGRQDLIFAGGGEEISLELAMQFDAMRALSTCFNNDPKKASRVYDVYRDGFVISGGAGMLVIEELNSALSRSAYIYAEIIGYAATSDGSNIVVPSGDGAIRCMNLARKGKNIPIDYLNVHGTGTKIGDLIELEAIRKVFLNEKKPMISATKSMTGHGLGASGVHEMIYTLLMLKYNFIAPTINIENLEPCAENMNIIQKTTNIEINTAMSNSFGFGGTNVSLIVKKY</sequence>
<keyword id="KW-0012">Acyltransferase</keyword>
<keyword id="KW-0963">Cytoplasm</keyword>
<keyword id="KW-0275">Fatty acid biosynthesis</keyword>
<keyword id="KW-0276">Fatty acid metabolism</keyword>
<keyword id="KW-0444">Lipid biosynthesis</keyword>
<keyword id="KW-0443">Lipid metabolism</keyword>
<keyword id="KW-1185">Reference proteome</keyword>
<keyword id="KW-0808">Transferase</keyword>
<reference key="1">
    <citation type="journal article" date="2000" name="Nature">
        <title>Genome sequence of the endocellular bacterial symbiont of aphids Buchnera sp. APS.</title>
        <authorList>
            <person name="Shigenobu S."/>
            <person name="Watanabe H."/>
            <person name="Hattori M."/>
            <person name="Sakaki Y."/>
            <person name="Ishikawa H."/>
        </authorList>
    </citation>
    <scope>NUCLEOTIDE SEQUENCE [LARGE SCALE GENOMIC DNA]</scope>
    <source>
        <strain>APS</strain>
    </source>
</reference>
<feature type="chain" id="PRO_0000180308" description="3-oxoacyl-[acyl-carrier-protein] synthase 1">
    <location>
        <begin position="1"/>
        <end position="406"/>
    </location>
</feature>
<feature type="domain" description="Ketosynthase family 3 (KS3)" evidence="2">
    <location>
        <begin position="1"/>
        <end position="405"/>
    </location>
</feature>
<feature type="active site" description="For beta-ketoacyl synthase activity" evidence="2">
    <location>
        <position position="164"/>
    </location>
</feature>
<feature type="active site" description="For beta-ketoacyl synthase activity" evidence="2">
    <location>
        <position position="299"/>
    </location>
</feature>
<feature type="active site" description="For beta-ketoacyl synthase activity" evidence="2">
    <location>
        <position position="335"/>
    </location>
</feature>
<evidence type="ECO:0000250" key="1">
    <source>
        <dbReference type="UniProtKB" id="P0A953"/>
    </source>
</evidence>
<evidence type="ECO:0000255" key="2">
    <source>
        <dbReference type="PROSITE-ProRule" id="PRU01348"/>
    </source>
</evidence>
<evidence type="ECO:0000305" key="3"/>
<dbReference type="EC" id="2.3.1.41" evidence="1"/>
<dbReference type="EMBL" id="BA000003">
    <property type="protein sequence ID" value="BAB12811.1"/>
    <property type="molecule type" value="Genomic_DNA"/>
</dbReference>
<dbReference type="RefSeq" id="NP_239925.1">
    <property type="nucleotide sequence ID" value="NC_002528.1"/>
</dbReference>
<dbReference type="RefSeq" id="WP_009874045.1">
    <property type="nucleotide sequence ID" value="NC_002528.1"/>
</dbReference>
<dbReference type="SMR" id="P57193"/>
<dbReference type="STRING" id="563178.BUAP5A_090"/>
<dbReference type="EnsemblBacteria" id="BAB12811">
    <property type="protein sequence ID" value="BAB12811"/>
    <property type="gene ID" value="BAB12811"/>
</dbReference>
<dbReference type="KEGG" id="buc:BU092"/>
<dbReference type="PATRIC" id="fig|107806.10.peg.99"/>
<dbReference type="eggNOG" id="COG0304">
    <property type="taxonomic scope" value="Bacteria"/>
</dbReference>
<dbReference type="HOGENOM" id="CLU_000022_69_2_6"/>
<dbReference type="UniPathway" id="UPA00094"/>
<dbReference type="Proteomes" id="UP000001806">
    <property type="component" value="Chromosome"/>
</dbReference>
<dbReference type="GO" id="GO:0005829">
    <property type="term" value="C:cytosol"/>
    <property type="evidence" value="ECO:0007669"/>
    <property type="project" value="TreeGrafter"/>
</dbReference>
<dbReference type="GO" id="GO:0004315">
    <property type="term" value="F:3-oxoacyl-[acyl-carrier-protein] synthase activity"/>
    <property type="evidence" value="ECO:0007669"/>
    <property type="project" value="UniProtKB-EC"/>
</dbReference>
<dbReference type="GO" id="GO:0006633">
    <property type="term" value="P:fatty acid biosynthetic process"/>
    <property type="evidence" value="ECO:0007669"/>
    <property type="project" value="UniProtKB-UniPathway"/>
</dbReference>
<dbReference type="CDD" id="cd00834">
    <property type="entry name" value="KAS_I_II"/>
    <property type="match status" value="1"/>
</dbReference>
<dbReference type="FunFam" id="3.40.47.10:FF:000006">
    <property type="entry name" value="3-oxoacyl-[acyl-carrier-protein] synthase I"/>
    <property type="match status" value="1"/>
</dbReference>
<dbReference type="Gene3D" id="3.40.47.10">
    <property type="match status" value="1"/>
</dbReference>
<dbReference type="InterPro" id="IPR000794">
    <property type="entry name" value="Beta-ketoacyl_synthase"/>
</dbReference>
<dbReference type="InterPro" id="IPR018201">
    <property type="entry name" value="Ketoacyl_synth_AS"/>
</dbReference>
<dbReference type="InterPro" id="IPR014031">
    <property type="entry name" value="Ketoacyl_synth_C"/>
</dbReference>
<dbReference type="InterPro" id="IPR014030">
    <property type="entry name" value="Ketoacyl_synth_N"/>
</dbReference>
<dbReference type="InterPro" id="IPR020841">
    <property type="entry name" value="PKS_Beta-ketoAc_synthase_dom"/>
</dbReference>
<dbReference type="InterPro" id="IPR016039">
    <property type="entry name" value="Thiolase-like"/>
</dbReference>
<dbReference type="PANTHER" id="PTHR11712:SF306">
    <property type="entry name" value="3-OXOACYL-[ACYL-CARRIER-PROTEIN] SYNTHASE 1"/>
    <property type="match status" value="1"/>
</dbReference>
<dbReference type="PANTHER" id="PTHR11712">
    <property type="entry name" value="POLYKETIDE SYNTHASE-RELATED"/>
    <property type="match status" value="1"/>
</dbReference>
<dbReference type="Pfam" id="PF00109">
    <property type="entry name" value="ketoacyl-synt"/>
    <property type="match status" value="1"/>
</dbReference>
<dbReference type="Pfam" id="PF02801">
    <property type="entry name" value="Ketoacyl-synt_C"/>
    <property type="match status" value="1"/>
</dbReference>
<dbReference type="SMART" id="SM00825">
    <property type="entry name" value="PKS_KS"/>
    <property type="match status" value="1"/>
</dbReference>
<dbReference type="SUPFAM" id="SSF53901">
    <property type="entry name" value="Thiolase-like"/>
    <property type="match status" value="2"/>
</dbReference>
<dbReference type="PROSITE" id="PS00606">
    <property type="entry name" value="KS3_1"/>
    <property type="match status" value="1"/>
</dbReference>
<dbReference type="PROSITE" id="PS52004">
    <property type="entry name" value="KS3_2"/>
    <property type="match status" value="1"/>
</dbReference>
<organism>
    <name type="scientific">Buchnera aphidicola subsp. Acyrthosiphon pisum (strain APS)</name>
    <name type="common">Acyrthosiphon pisum symbiotic bacterium</name>
    <dbReference type="NCBI Taxonomy" id="107806"/>
    <lineage>
        <taxon>Bacteria</taxon>
        <taxon>Pseudomonadati</taxon>
        <taxon>Pseudomonadota</taxon>
        <taxon>Gammaproteobacteria</taxon>
        <taxon>Enterobacterales</taxon>
        <taxon>Erwiniaceae</taxon>
        <taxon>Buchnera</taxon>
    </lineage>
</organism>
<gene>
    <name type="primary">fabB</name>
    <name type="ordered locus">BU092</name>
</gene>